<sequence length="288" mass="31992">MSKNQGGNKHQGGSKTHLGHRARKRFGQNFLNDDYIIEQIVDAINPLPGENLIEIGPGLAALTEPTVDRSGHLKVIEIDRDLVERLQHHPFLSSKLEVIQADALSIDFSQFAEEGPARVFGNLPYNISTPLIFHLLKFADDVKDMHFMLQKEVVDRLAAEPGSKSYGRISVGVQQACKVTPVVAVPPSAFTPPPKVESSVVRLEPYAESPHPVKDKAQLHSLCLTAFNQRRKTIRNNLKQLVPAEQMEALGIDPGARPETLSVDDYCRISDWLTEHSLTKQAEKNDSQ</sequence>
<name>RSMA_IDILO</name>
<gene>
    <name evidence="1" type="primary">rsmA</name>
    <name evidence="1" type="synonym">ksgA</name>
    <name type="ordered locus">IL2232</name>
</gene>
<keyword id="KW-0963">Cytoplasm</keyword>
<keyword id="KW-0489">Methyltransferase</keyword>
<keyword id="KW-1185">Reference proteome</keyword>
<keyword id="KW-0694">RNA-binding</keyword>
<keyword id="KW-0698">rRNA processing</keyword>
<keyword id="KW-0949">S-adenosyl-L-methionine</keyword>
<keyword id="KW-0808">Transferase</keyword>
<comment type="function">
    <text evidence="1">Specifically dimethylates two adjacent adenosines (A1518 and A1519) in the loop of a conserved hairpin near the 3'-end of 16S rRNA in the 30S particle. May play a critical role in biogenesis of 30S subunits.</text>
</comment>
<comment type="catalytic activity">
    <reaction evidence="1">
        <text>adenosine(1518)/adenosine(1519) in 16S rRNA + 4 S-adenosyl-L-methionine = N(6)-dimethyladenosine(1518)/N(6)-dimethyladenosine(1519) in 16S rRNA + 4 S-adenosyl-L-homocysteine + 4 H(+)</text>
        <dbReference type="Rhea" id="RHEA:19609"/>
        <dbReference type="Rhea" id="RHEA-COMP:10232"/>
        <dbReference type="Rhea" id="RHEA-COMP:10233"/>
        <dbReference type="ChEBI" id="CHEBI:15378"/>
        <dbReference type="ChEBI" id="CHEBI:57856"/>
        <dbReference type="ChEBI" id="CHEBI:59789"/>
        <dbReference type="ChEBI" id="CHEBI:74411"/>
        <dbReference type="ChEBI" id="CHEBI:74493"/>
        <dbReference type="EC" id="2.1.1.182"/>
    </reaction>
</comment>
<comment type="subcellular location">
    <subcellularLocation>
        <location evidence="1">Cytoplasm</location>
    </subcellularLocation>
</comment>
<comment type="similarity">
    <text evidence="1">Belongs to the class I-like SAM-binding methyltransferase superfamily. rRNA adenine N(6)-methyltransferase family. RsmA subfamily.</text>
</comment>
<accession>Q5QVN7</accession>
<protein>
    <recommendedName>
        <fullName evidence="1">Ribosomal RNA small subunit methyltransferase A</fullName>
        <ecNumber evidence="1">2.1.1.182</ecNumber>
    </recommendedName>
    <alternativeName>
        <fullName evidence="1">16S rRNA (adenine(1518)-N(6)/adenine(1519)-N(6))-dimethyltransferase</fullName>
    </alternativeName>
    <alternativeName>
        <fullName evidence="1">16S rRNA dimethyladenosine transferase</fullName>
    </alternativeName>
    <alternativeName>
        <fullName evidence="1">16S rRNA dimethylase</fullName>
    </alternativeName>
    <alternativeName>
        <fullName evidence="1">S-adenosylmethionine-6-N', N'-adenosyl(rRNA) dimethyltransferase</fullName>
    </alternativeName>
</protein>
<organism>
    <name type="scientific">Idiomarina loihiensis (strain ATCC BAA-735 / DSM 15497 / L2-TR)</name>
    <dbReference type="NCBI Taxonomy" id="283942"/>
    <lineage>
        <taxon>Bacteria</taxon>
        <taxon>Pseudomonadati</taxon>
        <taxon>Pseudomonadota</taxon>
        <taxon>Gammaproteobacteria</taxon>
        <taxon>Alteromonadales</taxon>
        <taxon>Idiomarinaceae</taxon>
        <taxon>Idiomarina</taxon>
    </lineage>
</organism>
<dbReference type="EC" id="2.1.1.182" evidence="1"/>
<dbReference type="EMBL" id="AE017340">
    <property type="protein sequence ID" value="AAV83064.1"/>
    <property type="molecule type" value="Genomic_DNA"/>
</dbReference>
<dbReference type="RefSeq" id="WP_011235459.1">
    <property type="nucleotide sequence ID" value="NC_006512.1"/>
</dbReference>
<dbReference type="SMR" id="Q5QVN7"/>
<dbReference type="STRING" id="283942.IL2232"/>
<dbReference type="GeneID" id="41337421"/>
<dbReference type="KEGG" id="ilo:IL2232"/>
<dbReference type="eggNOG" id="COG0030">
    <property type="taxonomic scope" value="Bacteria"/>
</dbReference>
<dbReference type="HOGENOM" id="CLU_041220_0_1_6"/>
<dbReference type="OrthoDB" id="9814755at2"/>
<dbReference type="Proteomes" id="UP000001171">
    <property type="component" value="Chromosome"/>
</dbReference>
<dbReference type="GO" id="GO:0005829">
    <property type="term" value="C:cytosol"/>
    <property type="evidence" value="ECO:0007669"/>
    <property type="project" value="TreeGrafter"/>
</dbReference>
<dbReference type="GO" id="GO:0052908">
    <property type="term" value="F:16S rRNA (adenine(1518)-N(6)/adenine(1519)-N(6))-dimethyltransferase activity"/>
    <property type="evidence" value="ECO:0007669"/>
    <property type="project" value="UniProtKB-EC"/>
</dbReference>
<dbReference type="GO" id="GO:0003723">
    <property type="term" value="F:RNA binding"/>
    <property type="evidence" value="ECO:0007669"/>
    <property type="project" value="UniProtKB-KW"/>
</dbReference>
<dbReference type="FunFam" id="1.10.8.100:FF:000001">
    <property type="entry name" value="Ribosomal RNA small subunit methyltransferase A"/>
    <property type="match status" value="1"/>
</dbReference>
<dbReference type="Gene3D" id="1.10.8.100">
    <property type="entry name" value="Ribosomal RNA adenine dimethylase-like, domain 2"/>
    <property type="match status" value="1"/>
</dbReference>
<dbReference type="Gene3D" id="3.40.50.150">
    <property type="entry name" value="Vaccinia Virus protein VP39"/>
    <property type="match status" value="1"/>
</dbReference>
<dbReference type="HAMAP" id="MF_00607">
    <property type="entry name" value="16SrRNA_methyltr_A"/>
    <property type="match status" value="1"/>
</dbReference>
<dbReference type="InterPro" id="IPR001737">
    <property type="entry name" value="KsgA/Erm"/>
</dbReference>
<dbReference type="InterPro" id="IPR023165">
    <property type="entry name" value="rRNA_Ade_diMease-like_C"/>
</dbReference>
<dbReference type="InterPro" id="IPR020596">
    <property type="entry name" value="rRNA_Ade_Mease_Trfase_CS"/>
</dbReference>
<dbReference type="InterPro" id="IPR020598">
    <property type="entry name" value="rRNA_Ade_methylase_Trfase_N"/>
</dbReference>
<dbReference type="InterPro" id="IPR011530">
    <property type="entry name" value="rRNA_adenine_dimethylase"/>
</dbReference>
<dbReference type="InterPro" id="IPR029063">
    <property type="entry name" value="SAM-dependent_MTases_sf"/>
</dbReference>
<dbReference type="NCBIfam" id="TIGR00755">
    <property type="entry name" value="ksgA"/>
    <property type="match status" value="1"/>
</dbReference>
<dbReference type="PANTHER" id="PTHR11727">
    <property type="entry name" value="DIMETHYLADENOSINE TRANSFERASE"/>
    <property type="match status" value="1"/>
</dbReference>
<dbReference type="PANTHER" id="PTHR11727:SF7">
    <property type="entry name" value="DIMETHYLADENOSINE TRANSFERASE-RELATED"/>
    <property type="match status" value="1"/>
</dbReference>
<dbReference type="Pfam" id="PF00398">
    <property type="entry name" value="RrnaAD"/>
    <property type="match status" value="1"/>
</dbReference>
<dbReference type="SMART" id="SM00650">
    <property type="entry name" value="rADc"/>
    <property type="match status" value="1"/>
</dbReference>
<dbReference type="SUPFAM" id="SSF53335">
    <property type="entry name" value="S-adenosyl-L-methionine-dependent methyltransferases"/>
    <property type="match status" value="1"/>
</dbReference>
<dbReference type="PROSITE" id="PS01131">
    <property type="entry name" value="RRNA_A_DIMETH"/>
    <property type="match status" value="1"/>
</dbReference>
<dbReference type="PROSITE" id="PS51689">
    <property type="entry name" value="SAM_RNA_A_N6_MT"/>
    <property type="match status" value="1"/>
</dbReference>
<reference key="1">
    <citation type="journal article" date="2004" name="Proc. Natl. Acad. Sci. U.S.A.">
        <title>Genome sequence of the deep-sea gamma-proteobacterium Idiomarina loihiensis reveals amino acid fermentation as a source of carbon and energy.</title>
        <authorList>
            <person name="Hou S."/>
            <person name="Saw J.H."/>
            <person name="Lee K.S."/>
            <person name="Freitas T.A."/>
            <person name="Belisle C."/>
            <person name="Kawarabayasi Y."/>
            <person name="Donachie S.P."/>
            <person name="Pikina A."/>
            <person name="Galperin M.Y."/>
            <person name="Koonin E.V."/>
            <person name="Makarova K.S."/>
            <person name="Omelchenko M.V."/>
            <person name="Sorokin A."/>
            <person name="Wolf Y.I."/>
            <person name="Li Q.X."/>
            <person name="Keum Y.S."/>
            <person name="Campbell S."/>
            <person name="Denery J."/>
            <person name="Aizawa S."/>
            <person name="Shibata S."/>
            <person name="Malahoff A."/>
            <person name="Alam M."/>
        </authorList>
    </citation>
    <scope>NUCLEOTIDE SEQUENCE [LARGE SCALE GENOMIC DNA]</scope>
    <source>
        <strain>ATCC BAA-735 / DSM 15497 / L2-TR</strain>
    </source>
</reference>
<evidence type="ECO:0000255" key="1">
    <source>
        <dbReference type="HAMAP-Rule" id="MF_00607"/>
    </source>
</evidence>
<evidence type="ECO:0000256" key="2">
    <source>
        <dbReference type="SAM" id="MobiDB-lite"/>
    </source>
</evidence>
<proteinExistence type="inferred from homology"/>
<feature type="chain" id="PRO_0000101542" description="Ribosomal RNA small subunit methyltransferase A">
    <location>
        <begin position="1"/>
        <end position="288"/>
    </location>
</feature>
<feature type="region of interest" description="Disordered" evidence="2">
    <location>
        <begin position="1"/>
        <end position="21"/>
    </location>
</feature>
<feature type="compositionally biased region" description="Polar residues" evidence="2">
    <location>
        <begin position="1"/>
        <end position="14"/>
    </location>
</feature>
<feature type="binding site" evidence="1">
    <location>
        <position position="29"/>
    </location>
    <ligand>
        <name>S-adenosyl-L-methionine</name>
        <dbReference type="ChEBI" id="CHEBI:59789"/>
    </ligand>
</feature>
<feature type="binding site" evidence="1">
    <location>
        <position position="31"/>
    </location>
    <ligand>
        <name>S-adenosyl-L-methionine</name>
        <dbReference type="ChEBI" id="CHEBI:59789"/>
    </ligand>
</feature>
<feature type="binding site" evidence="1">
    <location>
        <position position="56"/>
    </location>
    <ligand>
        <name>S-adenosyl-L-methionine</name>
        <dbReference type="ChEBI" id="CHEBI:59789"/>
    </ligand>
</feature>
<feature type="binding site" evidence="1">
    <location>
        <position position="77"/>
    </location>
    <ligand>
        <name>S-adenosyl-L-methionine</name>
        <dbReference type="ChEBI" id="CHEBI:59789"/>
    </ligand>
</feature>
<feature type="binding site" evidence="1">
    <location>
        <position position="102"/>
    </location>
    <ligand>
        <name>S-adenosyl-L-methionine</name>
        <dbReference type="ChEBI" id="CHEBI:59789"/>
    </ligand>
</feature>
<feature type="binding site" evidence="1">
    <location>
        <position position="122"/>
    </location>
    <ligand>
        <name>S-adenosyl-L-methionine</name>
        <dbReference type="ChEBI" id="CHEBI:59789"/>
    </ligand>
</feature>